<feature type="transit peptide" description="Chloroplast" evidence="2">
    <location>
        <begin position="1"/>
        <end position="58"/>
    </location>
</feature>
<feature type="chain" id="PRO_0000372313" description="Ent-beyerene synthase KSL2, chloroplastic">
    <location>
        <begin position="59"/>
        <end position="819"/>
    </location>
</feature>
<feature type="region of interest" description="Disordered" evidence="3">
    <location>
        <begin position="58"/>
        <end position="77"/>
    </location>
</feature>
<feature type="short sequence motif" description="DDXXD motif" evidence="1">
    <location>
        <begin position="567"/>
        <end position="571"/>
    </location>
</feature>
<feature type="compositionally biased region" description="Low complexity" evidence="3">
    <location>
        <begin position="58"/>
        <end position="76"/>
    </location>
</feature>
<feature type="binding site" evidence="1">
    <location>
        <position position="567"/>
    </location>
    <ligand>
        <name>Mg(2+)</name>
        <dbReference type="ChEBI" id="CHEBI:18420"/>
        <label>1</label>
    </ligand>
</feature>
<feature type="binding site" evidence="1">
    <location>
        <position position="567"/>
    </location>
    <ligand>
        <name>Mg(2+)</name>
        <dbReference type="ChEBI" id="CHEBI:18420"/>
        <label>2</label>
    </ligand>
</feature>
<feature type="binding site" evidence="1">
    <location>
        <position position="571"/>
    </location>
    <ligand>
        <name>Mg(2+)</name>
        <dbReference type="ChEBI" id="CHEBI:18420"/>
        <label>1</label>
    </ligand>
</feature>
<feature type="binding site" evidence="1">
    <location>
        <position position="571"/>
    </location>
    <ligand>
        <name>Mg(2+)</name>
        <dbReference type="ChEBI" id="CHEBI:18420"/>
        <label>2</label>
    </ligand>
</feature>
<feature type="binding site" evidence="1">
    <location>
        <position position="711"/>
    </location>
    <ligand>
        <name>Mg(2+)</name>
        <dbReference type="ChEBI" id="CHEBI:18420"/>
        <label>3</label>
    </ligand>
</feature>
<feature type="binding site" evidence="1">
    <location>
        <position position="715"/>
    </location>
    <ligand>
        <name>Mg(2+)</name>
        <dbReference type="ChEBI" id="CHEBI:18420"/>
        <label>3</label>
    </ligand>
</feature>
<feature type="binding site" evidence="1">
    <location>
        <position position="719"/>
    </location>
    <ligand>
        <name>Mg(2+)</name>
        <dbReference type="ChEBI" id="CHEBI:18420"/>
        <label>3</label>
    </ligand>
</feature>
<feature type="sequence conflict" description="In Ref. 1; BAR72396 and 6; EEE61666." evidence="8" ref="1 6">
    <original>M</original>
    <variation>I</variation>
    <location>
        <position position="686"/>
    </location>
</feature>
<comment type="function">
    <text evidence="4 5">Diterpene cyclase involved in jasmonic acid-dependent defense mechanisms in roots by mediating the biosynthesis of labdane-related diterpenoids (LRDs) natural products such as ent-beyerene, an antimicrobial compound (PubMed:25824047). Catalyzes the cyclization of ent-CDP into ent-beyerene as a major and ent-kaurene as a minor product (PubMed:25824047). May be involved in the catalysis of an early step of the gibberellin (GA) biosynthesis pathway (PubMed:23944972).</text>
</comment>
<comment type="catalytic activity">
    <reaction evidence="5">
        <text>ent-copalyl diphosphate = ent-beyerene + diphosphate</text>
        <dbReference type="Rhea" id="RHEA:79011"/>
        <dbReference type="ChEBI" id="CHEBI:33019"/>
        <dbReference type="ChEBI" id="CHEBI:58553"/>
        <dbReference type="ChEBI" id="CHEBI:229601"/>
        <dbReference type="EC" id="4.2.3.229"/>
    </reaction>
    <physiologicalReaction direction="left-to-right" evidence="5">
        <dbReference type="Rhea" id="RHEA:79012"/>
    </physiologicalReaction>
</comment>
<comment type="catalytic activity">
    <reaction evidence="5">
        <text>ent-copalyl diphosphate = ent-kaur-16-ene + diphosphate</text>
        <dbReference type="Rhea" id="RHEA:22220"/>
        <dbReference type="ChEBI" id="CHEBI:15415"/>
        <dbReference type="ChEBI" id="CHEBI:33019"/>
        <dbReference type="ChEBI" id="CHEBI:58553"/>
        <dbReference type="EC" id="4.2.3.19"/>
    </reaction>
    <physiologicalReaction direction="left-to-right" evidence="5">
        <dbReference type="Rhea" id="RHEA:22221"/>
    </physiologicalReaction>
</comment>
<comment type="cofactor">
    <cofactor evidence="1">
        <name>Mg(2+)</name>
        <dbReference type="ChEBI" id="CHEBI:18420"/>
    </cofactor>
    <text evidence="1">Binds 3 Mg(2+) ions per subunit.</text>
</comment>
<comment type="pathway">
    <text evidence="5">Secondary metabolite biosynthesis; terpenoid biosynthesis.</text>
</comment>
<comment type="subcellular location">
    <subcellularLocation>
        <location evidence="5">Plastid</location>
        <location evidence="5">Chloroplast</location>
    </subcellularLocation>
</comment>
<comment type="tissue specificity">
    <text evidence="4 5">Expressed in roots (PubMed:25824047). Highly expressed in stems, flowers and panicle (PubMed:23944972).</text>
</comment>
<comment type="induction">
    <text evidence="4 5">Strongly induced in roots by methyl jasmonate (meJA) (PubMed:25824047). Induced by drought stress (PubMed:23944972).</text>
</comment>
<comment type="domain">
    <text evidence="1">The Asp-Asp-Xaa-Xaa-Asp/Glu (DDXXD/E) motif is important for the catalytic activity, presumably through binding to Mg(2+).</text>
</comment>
<comment type="disruption phenotype">
    <text evidence="4">Severe dwarf phenotype with reduced shoot growth, reduced crown roots and growth of branch roots, abnormal leaf blade morphology, dark-green leaves, short and wide edges, leaf tips rounded and almost sterile seeds.</text>
</comment>
<comment type="similarity">
    <text evidence="8">Belongs to the terpene synthase family.</text>
</comment>
<comment type="sequence caution" evidence="8">
    <conflict type="erroneous gene model prediction">
        <sequence resource="EMBL-CDS" id="BAF15756"/>
    </conflict>
</comment>
<comment type="sequence caution" evidence="8">
    <conflict type="erroneous gene model prediction">
        <sequence resource="EMBL-CDS" id="BAS90963"/>
    </conflict>
</comment>
<comment type="sequence caution" evidence="8">
    <conflict type="erroneous gene model prediction">
        <sequence resource="EMBL-CDS" id="CAE05202"/>
    </conflict>
</comment>
<comment type="sequence caution" evidence="8">
    <conflict type="erroneous gene model prediction">
        <sequence resource="EMBL-CDS" id="EEE61666"/>
    </conflict>
</comment>
<gene>
    <name evidence="6 7" type="primary">KSL2</name>
    <name evidence="8" type="ordered locus">Os04g0612000</name>
    <name evidence="8" type="ordered locus">LOC_Os04g52240</name>
    <name evidence="12" type="ORF">OsJ_16127</name>
    <name evidence="11" type="ORF">OSJNBa0070C17.9</name>
    <name evidence="10" type="ORF">OSNPB_040612000</name>
</gene>
<dbReference type="EC" id="4.2.3.229" evidence="5"/>
<dbReference type="EC" id="4.2.3.19" evidence="5"/>
<dbReference type="EMBL" id="LC033788">
    <property type="protein sequence ID" value="BAR72396.1"/>
    <property type="molecule type" value="mRNA"/>
</dbReference>
<dbReference type="EMBL" id="AL731610">
    <property type="protein sequence ID" value="CAE05202.3"/>
    <property type="status" value="ALT_SEQ"/>
    <property type="molecule type" value="Genomic_DNA"/>
</dbReference>
<dbReference type="EMBL" id="AP008210">
    <property type="protein sequence ID" value="BAF15756.2"/>
    <property type="status" value="ALT_SEQ"/>
    <property type="molecule type" value="Genomic_DNA"/>
</dbReference>
<dbReference type="EMBL" id="AP014960">
    <property type="protein sequence ID" value="BAS90963.1"/>
    <property type="status" value="ALT_SEQ"/>
    <property type="molecule type" value="Genomic_DNA"/>
</dbReference>
<dbReference type="EMBL" id="CM000141">
    <property type="protein sequence ID" value="EEE61666.1"/>
    <property type="status" value="ALT_SEQ"/>
    <property type="molecule type" value="Genomic_DNA"/>
</dbReference>
<dbReference type="EMBL" id="DQ823350">
    <property type="protein sequence ID" value="ABH10731.1"/>
    <property type="molecule type" value="mRNA"/>
</dbReference>
<dbReference type="RefSeq" id="XP_015634420.1">
    <property type="nucleotide sequence ID" value="XM_015778934.1"/>
</dbReference>
<dbReference type="SMR" id="Q0JA81"/>
<dbReference type="FunCoup" id="Q0JA81">
    <property type="interactions" value="190"/>
</dbReference>
<dbReference type="STRING" id="39947.Q0JA81"/>
<dbReference type="PaxDb" id="39947-Q0JA81"/>
<dbReference type="EnsemblPlants" id="Os04t0612000-01">
    <property type="protein sequence ID" value="Os04t0612000-01"/>
    <property type="gene ID" value="Os04g0612000"/>
</dbReference>
<dbReference type="Gramene" id="Os04t0612000-01">
    <property type="protein sequence ID" value="Os04t0612000-01"/>
    <property type="gene ID" value="Os04g0612000"/>
</dbReference>
<dbReference type="KEGG" id="dosa:Os04g0612000"/>
<dbReference type="eggNOG" id="ENOG502QVGX">
    <property type="taxonomic scope" value="Eukaryota"/>
</dbReference>
<dbReference type="HOGENOM" id="CLU_003125_2_0_1"/>
<dbReference type="InParanoid" id="Q0JA81"/>
<dbReference type="OMA" id="CFPQCIE"/>
<dbReference type="OrthoDB" id="2343925at2759"/>
<dbReference type="BRENDA" id="4.2.3.B66">
    <property type="organism ID" value="8948"/>
</dbReference>
<dbReference type="PlantReactome" id="R-OSA-1119328">
    <property type="pathway name" value="Oleoresin sesquiterpene volatiles biosynthesis"/>
</dbReference>
<dbReference type="PlantReactome" id="R-OSA-1119348">
    <property type="pathway name" value="Ent-kaurene biosynthesis"/>
</dbReference>
<dbReference type="UniPathway" id="UPA00213"/>
<dbReference type="Proteomes" id="UP000000763">
    <property type="component" value="Chromosome 4"/>
</dbReference>
<dbReference type="Proteomes" id="UP000007752">
    <property type="component" value="Chromosome 4"/>
</dbReference>
<dbReference type="Proteomes" id="UP000059680">
    <property type="component" value="Chromosome 4"/>
</dbReference>
<dbReference type="GO" id="GO:0009507">
    <property type="term" value="C:chloroplast"/>
    <property type="evidence" value="ECO:0000314"/>
    <property type="project" value="UniProtKB"/>
</dbReference>
<dbReference type="GO" id="GO:0009899">
    <property type="term" value="F:ent-kaurene synthase activity"/>
    <property type="evidence" value="ECO:0000314"/>
    <property type="project" value="UniProtKB"/>
</dbReference>
<dbReference type="GO" id="GO:0000287">
    <property type="term" value="F:magnesium ion binding"/>
    <property type="evidence" value="ECO:0000318"/>
    <property type="project" value="GO_Central"/>
</dbReference>
<dbReference type="GO" id="GO:0010333">
    <property type="term" value="F:terpene synthase activity"/>
    <property type="evidence" value="ECO:0000314"/>
    <property type="project" value="UniProtKB"/>
</dbReference>
<dbReference type="GO" id="GO:0006952">
    <property type="term" value="P:defense response"/>
    <property type="evidence" value="ECO:0007669"/>
    <property type="project" value="UniProtKB-KW"/>
</dbReference>
<dbReference type="GO" id="GO:0016102">
    <property type="term" value="P:diterpenoid biosynthetic process"/>
    <property type="evidence" value="ECO:0000314"/>
    <property type="project" value="UniProtKB"/>
</dbReference>
<dbReference type="GO" id="GO:0033332">
    <property type="term" value="P:ent-kaurene biosynthetic process"/>
    <property type="evidence" value="ECO:0000314"/>
    <property type="project" value="UniProtKB"/>
</dbReference>
<dbReference type="GO" id="GO:0009686">
    <property type="term" value="P:gibberellin biosynthetic process"/>
    <property type="evidence" value="ECO:0000315"/>
    <property type="project" value="UniProtKB"/>
</dbReference>
<dbReference type="GO" id="GO:0009753">
    <property type="term" value="P:response to jasmonic acid"/>
    <property type="evidence" value="ECO:0000270"/>
    <property type="project" value="UniProtKB"/>
</dbReference>
<dbReference type="CDD" id="cd00684">
    <property type="entry name" value="Terpene_cyclase_plant_C1"/>
    <property type="match status" value="1"/>
</dbReference>
<dbReference type="FunFam" id="1.50.10.130:FF:000003">
    <property type="entry name" value="Ent-cassa-12,15-diene synthase"/>
    <property type="match status" value="1"/>
</dbReference>
<dbReference type="FunFam" id="1.10.600.10:FF:000005">
    <property type="entry name" value="Ent-kaur-16-ene synthase, chloroplastic"/>
    <property type="match status" value="1"/>
</dbReference>
<dbReference type="FunFam" id="1.50.10.160:FF:000007">
    <property type="entry name" value="Ent-kaurene synthase-like 2"/>
    <property type="match status" value="1"/>
</dbReference>
<dbReference type="Gene3D" id="1.50.10.160">
    <property type="match status" value="1"/>
</dbReference>
<dbReference type="Gene3D" id="1.10.600.10">
    <property type="entry name" value="Farnesyl Diphosphate Synthase"/>
    <property type="match status" value="1"/>
</dbReference>
<dbReference type="Gene3D" id="1.50.10.130">
    <property type="entry name" value="Terpene synthase, N-terminal domain"/>
    <property type="match status" value="1"/>
</dbReference>
<dbReference type="InterPro" id="IPR008949">
    <property type="entry name" value="Isoprenoid_synthase_dom_sf"/>
</dbReference>
<dbReference type="InterPro" id="IPR044814">
    <property type="entry name" value="Terpene_cyclase_plant_C1"/>
</dbReference>
<dbReference type="InterPro" id="IPR001906">
    <property type="entry name" value="Terpene_synth_N"/>
</dbReference>
<dbReference type="InterPro" id="IPR036965">
    <property type="entry name" value="Terpene_synth_N_sf"/>
</dbReference>
<dbReference type="InterPro" id="IPR050148">
    <property type="entry name" value="Terpene_synthase-like"/>
</dbReference>
<dbReference type="InterPro" id="IPR005630">
    <property type="entry name" value="Terpene_synthase_metal-bd"/>
</dbReference>
<dbReference type="InterPro" id="IPR008930">
    <property type="entry name" value="Terpenoid_cyclase/PrenylTrfase"/>
</dbReference>
<dbReference type="PANTHER" id="PTHR31739">
    <property type="entry name" value="ENT-COPALYL DIPHOSPHATE SYNTHASE, CHLOROPLASTIC"/>
    <property type="match status" value="1"/>
</dbReference>
<dbReference type="PANTHER" id="PTHR31739:SF16">
    <property type="entry name" value="ENT-KAURENE SYNTHASE-LIKE 3"/>
    <property type="match status" value="1"/>
</dbReference>
<dbReference type="Pfam" id="PF01397">
    <property type="entry name" value="Terpene_synth"/>
    <property type="match status" value="1"/>
</dbReference>
<dbReference type="Pfam" id="PF03936">
    <property type="entry name" value="Terpene_synth_C"/>
    <property type="match status" value="1"/>
</dbReference>
<dbReference type="SFLD" id="SFLDG01014">
    <property type="entry name" value="Terpene_Cyclase_Like_1_N-term"/>
    <property type="match status" value="1"/>
</dbReference>
<dbReference type="SUPFAM" id="SSF48239">
    <property type="entry name" value="Terpenoid cyclases/Protein prenyltransferases"/>
    <property type="match status" value="2"/>
</dbReference>
<dbReference type="SUPFAM" id="SSF48576">
    <property type="entry name" value="Terpenoid synthases"/>
    <property type="match status" value="1"/>
</dbReference>
<reference evidence="9" key="1">
    <citation type="journal article" date="2015" name="Biochem. Biophys. Res. Commun.">
        <title>The rice ent-KAURENE SYNTHASE LIKE 2 encodes a functional ent-beyerene synthase.</title>
        <authorList>
            <person name="Tezuka D."/>
            <person name="Ito A."/>
            <person name="Mitsuhashi W."/>
            <person name="Toyomasu T."/>
            <person name="Imai R."/>
        </authorList>
    </citation>
    <scope>NUCLEOTIDE SEQUENCE [MRNA]</scope>
    <scope>FUNCTION</scope>
    <scope>CATALYTIC ACTIVITY</scope>
    <scope>PATHWAY</scope>
    <scope>INDUCTION BY JASMONIC ACID</scope>
    <scope>TISSUE SPECIFICITY</scope>
    <scope>SUBCELLULAR LOCATION</scope>
    <source>
        <strain>cv. Nipponbare</strain>
        <strain>cv. Yukihikari</strain>
    </source>
</reference>
<reference key="2">
    <citation type="journal article" date="2002" name="Nature">
        <title>Sequence and analysis of rice chromosome 4.</title>
        <authorList>
            <person name="Feng Q."/>
            <person name="Zhang Y."/>
            <person name="Hao P."/>
            <person name="Wang S."/>
            <person name="Fu G."/>
            <person name="Huang Y."/>
            <person name="Li Y."/>
            <person name="Zhu J."/>
            <person name="Liu Y."/>
            <person name="Hu X."/>
            <person name="Jia P."/>
            <person name="Zhang Y."/>
            <person name="Zhao Q."/>
            <person name="Ying K."/>
            <person name="Yu S."/>
            <person name="Tang Y."/>
            <person name="Weng Q."/>
            <person name="Zhang L."/>
            <person name="Lu Y."/>
            <person name="Mu J."/>
            <person name="Lu Y."/>
            <person name="Zhang L.S."/>
            <person name="Yu Z."/>
            <person name="Fan D."/>
            <person name="Liu X."/>
            <person name="Lu T."/>
            <person name="Li C."/>
            <person name="Wu Y."/>
            <person name="Sun T."/>
            <person name="Lei H."/>
            <person name="Li T."/>
            <person name="Hu H."/>
            <person name="Guan J."/>
            <person name="Wu M."/>
            <person name="Zhang R."/>
            <person name="Zhou B."/>
            <person name="Chen Z."/>
            <person name="Chen L."/>
            <person name="Jin Z."/>
            <person name="Wang R."/>
            <person name="Yin H."/>
            <person name="Cai Z."/>
            <person name="Ren S."/>
            <person name="Lv G."/>
            <person name="Gu W."/>
            <person name="Zhu G."/>
            <person name="Tu Y."/>
            <person name="Jia J."/>
            <person name="Zhang Y."/>
            <person name="Chen J."/>
            <person name="Kang H."/>
            <person name="Chen X."/>
            <person name="Shao C."/>
            <person name="Sun Y."/>
            <person name="Hu Q."/>
            <person name="Zhang X."/>
            <person name="Zhang W."/>
            <person name="Wang L."/>
            <person name="Ding C."/>
            <person name="Sheng H."/>
            <person name="Gu J."/>
            <person name="Chen S."/>
            <person name="Ni L."/>
            <person name="Zhu F."/>
            <person name="Chen W."/>
            <person name="Lan L."/>
            <person name="Lai Y."/>
            <person name="Cheng Z."/>
            <person name="Gu M."/>
            <person name="Jiang J."/>
            <person name="Li J."/>
            <person name="Hong G."/>
            <person name="Xue Y."/>
            <person name="Han B."/>
        </authorList>
    </citation>
    <scope>NUCLEOTIDE SEQUENCE [LARGE SCALE GENOMIC DNA]</scope>
    <source>
        <strain>cv. Nipponbare</strain>
    </source>
</reference>
<reference key="3">
    <citation type="journal article" date="2005" name="Nature">
        <title>The map-based sequence of the rice genome.</title>
        <authorList>
            <consortium name="International rice genome sequencing project (IRGSP)"/>
        </authorList>
    </citation>
    <scope>NUCLEOTIDE SEQUENCE [LARGE SCALE GENOMIC DNA]</scope>
    <source>
        <strain>cv. Nipponbare</strain>
    </source>
</reference>
<reference key="4">
    <citation type="journal article" date="2008" name="Nucleic Acids Res.">
        <title>The rice annotation project database (RAP-DB): 2008 update.</title>
        <authorList>
            <consortium name="The rice annotation project (RAP)"/>
        </authorList>
    </citation>
    <scope>GENOME REANNOTATION</scope>
    <source>
        <strain>cv. Nipponbare</strain>
    </source>
</reference>
<reference key="5">
    <citation type="journal article" date="2013" name="Rice">
        <title>Improvement of the Oryza sativa Nipponbare reference genome using next generation sequence and optical map data.</title>
        <authorList>
            <person name="Kawahara Y."/>
            <person name="de la Bastide M."/>
            <person name="Hamilton J.P."/>
            <person name="Kanamori H."/>
            <person name="McCombie W.R."/>
            <person name="Ouyang S."/>
            <person name="Schwartz D.C."/>
            <person name="Tanaka T."/>
            <person name="Wu J."/>
            <person name="Zhou S."/>
            <person name="Childs K.L."/>
            <person name="Davidson R.M."/>
            <person name="Lin H."/>
            <person name="Quesada-Ocampo L."/>
            <person name="Vaillancourt B."/>
            <person name="Sakai H."/>
            <person name="Lee S.S."/>
            <person name="Kim J."/>
            <person name="Numa H."/>
            <person name="Itoh T."/>
            <person name="Buell C.R."/>
            <person name="Matsumoto T."/>
        </authorList>
    </citation>
    <scope>GENOME REANNOTATION</scope>
    <source>
        <strain>cv. Nipponbare</strain>
    </source>
</reference>
<reference key="6">
    <citation type="journal article" date="2005" name="PLoS Biol.">
        <title>The genomes of Oryza sativa: a history of duplications.</title>
        <authorList>
            <person name="Yu J."/>
            <person name="Wang J."/>
            <person name="Lin W."/>
            <person name="Li S."/>
            <person name="Li H."/>
            <person name="Zhou J."/>
            <person name="Ni P."/>
            <person name="Dong W."/>
            <person name="Hu S."/>
            <person name="Zeng C."/>
            <person name="Zhang J."/>
            <person name="Zhang Y."/>
            <person name="Li R."/>
            <person name="Xu Z."/>
            <person name="Li S."/>
            <person name="Li X."/>
            <person name="Zheng H."/>
            <person name="Cong L."/>
            <person name="Lin L."/>
            <person name="Yin J."/>
            <person name="Geng J."/>
            <person name="Li G."/>
            <person name="Shi J."/>
            <person name="Liu J."/>
            <person name="Lv H."/>
            <person name="Li J."/>
            <person name="Wang J."/>
            <person name="Deng Y."/>
            <person name="Ran L."/>
            <person name="Shi X."/>
            <person name="Wang X."/>
            <person name="Wu Q."/>
            <person name="Li C."/>
            <person name="Ren X."/>
            <person name="Wang J."/>
            <person name="Wang X."/>
            <person name="Li D."/>
            <person name="Liu D."/>
            <person name="Zhang X."/>
            <person name="Ji Z."/>
            <person name="Zhao W."/>
            <person name="Sun Y."/>
            <person name="Zhang Z."/>
            <person name="Bao J."/>
            <person name="Han Y."/>
            <person name="Dong L."/>
            <person name="Ji J."/>
            <person name="Chen P."/>
            <person name="Wu S."/>
            <person name="Liu J."/>
            <person name="Xiao Y."/>
            <person name="Bu D."/>
            <person name="Tan J."/>
            <person name="Yang L."/>
            <person name="Ye C."/>
            <person name="Zhang J."/>
            <person name="Xu J."/>
            <person name="Zhou Y."/>
            <person name="Yu Y."/>
            <person name="Zhang B."/>
            <person name="Zhuang S."/>
            <person name="Wei H."/>
            <person name="Liu B."/>
            <person name="Lei M."/>
            <person name="Yu H."/>
            <person name="Li Y."/>
            <person name="Xu H."/>
            <person name="Wei S."/>
            <person name="He X."/>
            <person name="Fang L."/>
            <person name="Zhang Z."/>
            <person name="Zhang Y."/>
            <person name="Huang X."/>
            <person name="Su Z."/>
            <person name="Tong W."/>
            <person name="Li J."/>
            <person name="Tong Z."/>
            <person name="Li S."/>
            <person name="Ye J."/>
            <person name="Wang L."/>
            <person name="Fang L."/>
            <person name="Lei T."/>
            <person name="Chen C.-S."/>
            <person name="Chen H.-C."/>
            <person name="Xu Z."/>
            <person name="Li H."/>
            <person name="Huang H."/>
            <person name="Zhang F."/>
            <person name="Xu H."/>
            <person name="Li N."/>
            <person name="Zhao C."/>
            <person name="Li S."/>
            <person name="Dong L."/>
            <person name="Huang Y."/>
            <person name="Li L."/>
            <person name="Xi Y."/>
            <person name="Qi Q."/>
            <person name="Li W."/>
            <person name="Zhang B."/>
            <person name="Hu W."/>
            <person name="Zhang Y."/>
            <person name="Tian X."/>
            <person name="Jiao Y."/>
            <person name="Liang X."/>
            <person name="Jin J."/>
            <person name="Gao L."/>
            <person name="Zheng W."/>
            <person name="Hao B."/>
            <person name="Liu S.-M."/>
            <person name="Wang W."/>
            <person name="Yuan L."/>
            <person name="Cao M."/>
            <person name="McDermott J."/>
            <person name="Samudrala R."/>
            <person name="Wang J."/>
            <person name="Wong G.K.-S."/>
            <person name="Yang H."/>
        </authorList>
    </citation>
    <scope>NUCLEOTIDE SEQUENCE [LARGE SCALE GENOMIC DNA]</scope>
    <source>
        <strain>cv. Nipponbare</strain>
    </source>
</reference>
<reference key="7">
    <citation type="journal article" date="2007" name="Phytochemistry">
        <title>Functional characterization of the rice kaurene synthase-like gene family.</title>
        <authorList>
            <person name="Xu M."/>
            <person name="Wilderman P.R."/>
            <person name="Morrone D."/>
            <person name="Xu J."/>
            <person name="Roy A."/>
            <person name="Margis-Pinheiro M."/>
            <person name="Upadhyaya N.M."/>
            <person name="Coates R.M."/>
            <person name="Peters R.J."/>
        </authorList>
    </citation>
    <scope>NUCLEOTIDE SEQUENCE [MRNA] OF 140-654</scope>
</reference>
<reference key="8">
    <citation type="journal article" date="2014" name="Plant Biol.">
        <title>Isolation and characterisation of a dwarf rice mutant exhibiting defective gibberellins biosynthesis.</title>
        <authorList>
            <person name="Ji S.H."/>
            <person name="Gururani M.A."/>
            <person name="Lee J.W."/>
            <person name="Ahn B.O."/>
            <person name="Chun S.C."/>
        </authorList>
    </citation>
    <scope>FUNCTION</scope>
    <scope>TISSUE SPECIFICITY</scope>
    <scope>INDUCTION</scope>
    <scope>DISRUPTION PHENOTYPE</scope>
</reference>
<protein>
    <recommendedName>
        <fullName evidence="7">Ent-beyerene synthase KSL2, chloroplastic</fullName>
        <ecNumber evidence="5">4.2.3.229</ecNumber>
    </recommendedName>
    <alternativeName>
        <fullName evidence="6 7">Ent-kaurene synthase-like 2</fullName>
        <shortName evidence="6 7">OsKSL2</shortName>
        <ecNumber evidence="5">4.2.3.19</ecNumber>
    </alternativeName>
</protein>
<organism>
    <name type="scientific">Oryza sativa subsp. japonica</name>
    <name type="common">Rice</name>
    <dbReference type="NCBI Taxonomy" id="39947"/>
    <lineage>
        <taxon>Eukaryota</taxon>
        <taxon>Viridiplantae</taxon>
        <taxon>Streptophyta</taxon>
        <taxon>Embryophyta</taxon>
        <taxon>Tracheophyta</taxon>
        <taxon>Spermatophyta</taxon>
        <taxon>Magnoliopsida</taxon>
        <taxon>Liliopsida</taxon>
        <taxon>Poales</taxon>
        <taxon>Poaceae</taxon>
        <taxon>BOP clade</taxon>
        <taxon>Oryzoideae</taxon>
        <taxon>Oryzeae</taxon>
        <taxon>Oryzinae</taxon>
        <taxon>Oryza</taxon>
        <taxon>Oryza sativa</taxon>
    </lineage>
</organism>
<name>KSL2_ORYSJ</name>
<sequence length="819" mass="91283">MLPCLFPAYGSVVACKPSAIDRSPFGLLSQPKQTNRTLIRRPKVTKAFMAIEAMRHCSSSSSSEEGGAAATTAARSAVRERLQLAPPSPSPSPYDTAWVAMVPALRRGGGGPRFPQCVAWIQRNQRGDGSWRHAAAAHQQLGSSPEIVTERDLSSTLACVLALARWDAGSEHVRRGLQFIGRNMSVAMDDQTAAPASGSVVSFAAMLRMAMEMGLEVPAVSQADVRDRDAGVICHGGRTEYTAYVSEGLGNIQNWNEVMKFQRKNGSLFNSPYTTAAALVHNYDAKALQYLDMLLDKFGSAVPAAYPANIQSQLYMVDVLEKMGISRHFVGEIKSILDMTYSCWKQRDEEIVLDMQTCGMAFRMLRMNGYDVSSDELSHFSEPSSFHNSLQGYLNDTRSLLELHKASKVSIAEKEVILDNIGSWTGCLLKEQLLSSAMKRNPLSEEVEYALEFPFYTILDRLDHKRNIEHFDITSSQMLETAYLPCHSNEEIMALGVRDFSSSQFIFQEELQQLNSWVKESRLDQLQFARQKLDYFYFSAAATIFTPELSDVRILWAKNGVLTTVVDDFFDVGGSKEELENLVALVEKWDKNDKTEYYSEQVEIVFSAIYTSTNQLGSMASVVQGRDVTKHLVEIWQELLRSMMTEVEWRQSRYVPTAEEYMENAVVTFALGPVVLPALYLVGPKMPDSVIRSQECSELFRLMSKCGRLLNDVQSYEREGSQGKLNSVSLLALHSGGSVSMEEAVKQIQRPIEKCRRELLKLVVSRGGAVPRPCRELFWSMCKVCHFFYSGGDGFSSPTAKAGALDAVIHEPLNLSCSV</sequence>
<accession>Q0JA81</accession>
<accession>A0A0F7QZZ2</accession>
<accession>A0A0P0WEP9</accession>
<accession>A4KAG6</accession>
<accession>B9FCG1</accession>
<accession>Q7XLD9</accession>
<keyword id="KW-0150">Chloroplast</keyword>
<keyword id="KW-0456">Lyase</keyword>
<keyword id="KW-0460">Magnesium</keyword>
<keyword id="KW-0479">Metal-binding</keyword>
<keyword id="KW-0611">Plant defense</keyword>
<keyword id="KW-0934">Plastid</keyword>
<keyword id="KW-1185">Reference proteome</keyword>
<keyword id="KW-0809">Transit peptide</keyword>
<evidence type="ECO:0000250" key="1">
    <source>
        <dbReference type="UniProtKB" id="Q40577"/>
    </source>
</evidence>
<evidence type="ECO:0000255" key="2"/>
<evidence type="ECO:0000256" key="3">
    <source>
        <dbReference type="SAM" id="MobiDB-lite"/>
    </source>
</evidence>
<evidence type="ECO:0000269" key="4">
    <source>
    </source>
</evidence>
<evidence type="ECO:0000269" key="5">
    <source>
    </source>
</evidence>
<evidence type="ECO:0000303" key="6">
    <source>
    </source>
</evidence>
<evidence type="ECO:0000303" key="7">
    <source>
    </source>
</evidence>
<evidence type="ECO:0000305" key="8"/>
<evidence type="ECO:0000312" key="9">
    <source>
        <dbReference type="EMBL" id="BAR72396.1"/>
    </source>
</evidence>
<evidence type="ECO:0000312" key="10">
    <source>
        <dbReference type="EMBL" id="BAS90963.1"/>
    </source>
</evidence>
<evidence type="ECO:0000312" key="11">
    <source>
        <dbReference type="EMBL" id="CAE05202.3"/>
    </source>
</evidence>
<evidence type="ECO:0000312" key="12">
    <source>
        <dbReference type="EMBL" id="EEE61666.1"/>
    </source>
</evidence>
<proteinExistence type="evidence at protein level"/>